<organism>
    <name type="scientific">Yersinia pestis bv. Antiqua (strain Nepal516)</name>
    <dbReference type="NCBI Taxonomy" id="377628"/>
    <lineage>
        <taxon>Bacteria</taxon>
        <taxon>Pseudomonadati</taxon>
        <taxon>Pseudomonadota</taxon>
        <taxon>Gammaproteobacteria</taxon>
        <taxon>Enterobacterales</taxon>
        <taxon>Yersiniaceae</taxon>
        <taxon>Yersinia</taxon>
    </lineage>
</organism>
<sequence length="466" mass="52074">MSVVPVVDVLQGRAAVGSEVTVRGWVRTRRDSKAGISFVAVYDGSCFDPLQAVVNNTLPNYQDEVLHLTTGCSVEVTGTVVASPGEGQSFEIQATAINVVGWVDDPDTYPMAAKRHSIEYLREVAHLRPRTNLIGAVARVRHTLAQAIHRFFDENGYFWVSTPLITASDTEGAGEMFRVSTLDLENLPRTDTGAVDFSEDFFGKEAFLTVSGQLNGETYACALSKVYTFGPTFRAENSNTSRHLAEFWMVEPEVAFASLDDVAGLAEKMLKYVFQAVLNERADDMKFFAERVDKDAVDRLQRFVTSDFAQVDYTDAIEILLASGQKFENDVSWGIDLSSEHERYLAEKHFKAPVVVKNYPKDIKAFYMRMNEDGKTVAAMDVLAPGIGEIIGGSQREERLDVLDARLAEMGLNKEDYWWYRDLRRYGTVPHSGFGLGFERLISYVTGVQNVRDVIPFPRTPRNASF</sequence>
<dbReference type="EC" id="6.1.1.22" evidence="1"/>
<dbReference type="EMBL" id="CP000305">
    <property type="protein sequence ID" value="ABG18893.1"/>
    <property type="molecule type" value="Genomic_DNA"/>
</dbReference>
<dbReference type="EMBL" id="ACNQ01000017">
    <property type="protein sequence ID" value="EEO75002.1"/>
    <property type="molecule type" value="Genomic_DNA"/>
</dbReference>
<dbReference type="RefSeq" id="WP_002211301.1">
    <property type="nucleotide sequence ID" value="NZ_ACNQ01000017.1"/>
</dbReference>
<dbReference type="SMR" id="Q1CGI7"/>
<dbReference type="GeneID" id="96665013"/>
<dbReference type="KEGG" id="ypn:YPN_2565"/>
<dbReference type="HOGENOM" id="CLU_004553_2_0_6"/>
<dbReference type="Proteomes" id="UP000008936">
    <property type="component" value="Chromosome"/>
</dbReference>
<dbReference type="GO" id="GO:0005737">
    <property type="term" value="C:cytoplasm"/>
    <property type="evidence" value="ECO:0007669"/>
    <property type="project" value="UniProtKB-SubCell"/>
</dbReference>
<dbReference type="GO" id="GO:0004816">
    <property type="term" value="F:asparagine-tRNA ligase activity"/>
    <property type="evidence" value="ECO:0007669"/>
    <property type="project" value="UniProtKB-UniRule"/>
</dbReference>
<dbReference type="GO" id="GO:0005524">
    <property type="term" value="F:ATP binding"/>
    <property type="evidence" value="ECO:0007669"/>
    <property type="project" value="UniProtKB-UniRule"/>
</dbReference>
<dbReference type="GO" id="GO:0003676">
    <property type="term" value="F:nucleic acid binding"/>
    <property type="evidence" value="ECO:0007669"/>
    <property type="project" value="InterPro"/>
</dbReference>
<dbReference type="GO" id="GO:0006421">
    <property type="term" value="P:asparaginyl-tRNA aminoacylation"/>
    <property type="evidence" value="ECO:0007669"/>
    <property type="project" value="UniProtKB-UniRule"/>
</dbReference>
<dbReference type="CDD" id="cd00776">
    <property type="entry name" value="AsxRS_core"/>
    <property type="match status" value="1"/>
</dbReference>
<dbReference type="CDD" id="cd04318">
    <property type="entry name" value="EcAsnRS_like_N"/>
    <property type="match status" value="1"/>
</dbReference>
<dbReference type="FunFam" id="3.30.930.10:FF:000016">
    <property type="entry name" value="Asparagine--tRNA ligase"/>
    <property type="match status" value="1"/>
</dbReference>
<dbReference type="Gene3D" id="3.30.930.10">
    <property type="entry name" value="Bira Bifunctional Protein, Domain 2"/>
    <property type="match status" value="1"/>
</dbReference>
<dbReference type="Gene3D" id="2.40.50.140">
    <property type="entry name" value="Nucleic acid-binding proteins"/>
    <property type="match status" value="1"/>
</dbReference>
<dbReference type="HAMAP" id="MF_00534">
    <property type="entry name" value="Asn_tRNA_synth"/>
    <property type="match status" value="1"/>
</dbReference>
<dbReference type="InterPro" id="IPR004364">
    <property type="entry name" value="Aa-tRNA-synt_II"/>
</dbReference>
<dbReference type="InterPro" id="IPR006195">
    <property type="entry name" value="aa-tRNA-synth_II"/>
</dbReference>
<dbReference type="InterPro" id="IPR045864">
    <property type="entry name" value="aa-tRNA-synth_II/BPL/LPL"/>
</dbReference>
<dbReference type="InterPro" id="IPR004522">
    <property type="entry name" value="Asn-tRNA-ligase"/>
</dbReference>
<dbReference type="InterPro" id="IPR002312">
    <property type="entry name" value="Asp/Asn-tRNA-synth_IIb"/>
</dbReference>
<dbReference type="InterPro" id="IPR012340">
    <property type="entry name" value="NA-bd_OB-fold"/>
</dbReference>
<dbReference type="InterPro" id="IPR004365">
    <property type="entry name" value="NA-bd_OB_tRNA"/>
</dbReference>
<dbReference type="NCBIfam" id="TIGR00457">
    <property type="entry name" value="asnS"/>
    <property type="match status" value="1"/>
</dbReference>
<dbReference type="NCBIfam" id="NF003037">
    <property type="entry name" value="PRK03932.1"/>
    <property type="match status" value="1"/>
</dbReference>
<dbReference type="PANTHER" id="PTHR22594:SF34">
    <property type="entry name" value="ASPARAGINE--TRNA LIGASE, MITOCHONDRIAL-RELATED"/>
    <property type="match status" value="1"/>
</dbReference>
<dbReference type="PANTHER" id="PTHR22594">
    <property type="entry name" value="ASPARTYL/LYSYL-TRNA SYNTHETASE"/>
    <property type="match status" value="1"/>
</dbReference>
<dbReference type="Pfam" id="PF00152">
    <property type="entry name" value="tRNA-synt_2"/>
    <property type="match status" value="1"/>
</dbReference>
<dbReference type="Pfam" id="PF01336">
    <property type="entry name" value="tRNA_anti-codon"/>
    <property type="match status" value="1"/>
</dbReference>
<dbReference type="PRINTS" id="PR01042">
    <property type="entry name" value="TRNASYNTHASP"/>
</dbReference>
<dbReference type="SUPFAM" id="SSF55681">
    <property type="entry name" value="Class II aaRS and biotin synthetases"/>
    <property type="match status" value="1"/>
</dbReference>
<dbReference type="SUPFAM" id="SSF50249">
    <property type="entry name" value="Nucleic acid-binding proteins"/>
    <property type="match status" value="1"/>
</dbReference>
<dbReference type="PROSITE" id="PS50862">
    <property type="entry name" value="AA_TRNA_LIGASE_II"/>
    <property type="match status" value="1"/>
</dbReference>
<evidence type="ECO:0000255" key="1">
    <source>
        <dbReference type="HAMAP-Rule" id="MF_00534"/>
    </source>
</evidence>
<keyword id="KW-0030">Aminoacyl-tRNA synthetase</keyword>
<keyword id="KW-0067">ATP-binding</keyword>
<keyword id="KW-0963">Cytoplasm</keyword>
<keyword id="KW-0436">Ligase</keyword>
<keyword id="KW-0547">Nucleotide-binding</keyword>
<keyword id="KW-0648">Protein biosynthesis</keyword>
<proteinExistence type="inferred from homology"/>
<name>SYN_YERPN</name>
<protein>
    <recommendedName>
        <fullName evidence="1">Asparagine--tRNA ligase</fullName>
        <ecNumber evidence="1">6.1.1.22</ecNumber>
    </recommendedName>
    <alternativeName>
        <fullName evidence="1">Asparaginyl-tRNA synthetase</fullName>
        <shortName evidence="1">AsnRS</shortName>
    </alternativeName>
</protein>
<reference key="1">
    <citation type="journal article" date="2006" name="J. Bacteriol.">
        <title>Complete genome sequence of Yersinia pestis strains Antiqua and Nepal516: evidence of gene reduction in an emerging pathogen.</title>
        <authorList>
            <person name="Chain P.S.G."/>
            <person name="Hu P."/>
            <person name="Malfatti S.A."/>
            <person name="Radnedge L."/>
            <person name="Larimer F."/>
            <person name="Vergez L.M."/>
            <person name="Worsham P."/>
            <person name="Chu M.C."/>
            <person name="Andersen G.L."/>
        </authorList>
    </citation>
    <scope>NUCLEOTIDE SEQUENCE [LARGE SCALE GENOMIC DNA]</scope>
    <source>
        <strain>Nepal516</strain>
    </source>
</reference>
<reference key="2">
    <citation type="submission" date="2009-04" db="EMBL/GenBank/DDBJ databases">
        <title>Yersinia pestis Nepal516A whole genome shotgun sequencing project.</title>
        <authorList>
            <person name="Plunkett G. III"/>
            <person name="Anderson B.D."/>
            <person name="Baumler D.J."/>
            <person name="Burland V."/>
            <person name="Cabot E.L."/>
            <person name="Glasner J.D."/>
            <person name="Mau B."/>
            <person name="Neeno-Eckwall E."/>
            <person name="Perna N.T."/>
            <person name="Munk A.C."/>
            <person name="Tapia R."/>
            <person name="Green L.D."/>
            <person name="Rogers Y.C."/>
            <person name="Detter J.C."/>
            <person name="Bruce D.C."/>
            <person name="Brettin T.S."/>
        </authorList>
    </citation>
    <scope>NUCLEOTIDE SEQUENCE [LARGE SCALE GENOMIC DNA]</scope>
    <source>
        <strain>Nepal516</strain>
    </source>
</reference>
<comment type="catalytic activity">
    <reaction evidence="1">
        <text>tRNA(Asn) + L-asparagine + ATP = L-asparaginyl-tRNA(Asn) + AMP + diphosphate + H(+)</text>
        <dbReference type="Rhea" id="RHEA:11180"/>
        <dbReference type="Rhea" id="RHEA-COMP:9659"/>
        <dbReference type="Rhea" id="RHEA-COMP:9674"/>
        <dbReference type="ChEBI" id="CHEBI:15378"/>
        <dbReference type="ChEBI" id="CHEBI:30616"/>
        <dbReference type="ChEBI" id="CHEBI:33019"/>
        <dbReference type="ChEBI" id="CHEBI:58048"/>
        <dbReference type="ChEBI" id="CHEBI:78442"/>
        <dbReference type="ChEBI" id="CHEBI:78515"/>
        <dbReference type="ChEBI" id="CHEBI:456215"/>
        <dbReference type="EC" id="6.1.1.22"/>
    </reaction>
</comment>
<comment type="subunit">
    <text evidence="1">Homodimer.</text>
</comment>
<comment type="subcellular location">
    <subcellularLocation>
        <location>Cytoplasm</location>
    </subcellularLocation>
</comment>
<comment type="similarity">
    <text evidence="1">Belongs to the class-II aminoacyl-tRNA synthetase family.</text>
</comment>
<accession>Q1CGI7</accession>
<accession>C4GVQ2</accession>
<gene>
    <name evidence="1" type="primary">asnS</name>
    <name type="ordered locus">YPN_2565</name>
    <name type="ORF">YP516_2886</name>
</gene>
<feature type="chain" id="PRO_1000051461" description="Asparagine--tRNA ligase">
    <location>
        <begin position="1"/>
        <end position="466"/>
    </location>
</feature>